<name>Y1362_FRATO</name>
<dbReference type="EMBL" id="CP000437">
    <property type="protein sequence ID" value="ABI83187.1"/>
    <property type="molecule type" value="Genomic_DNA"/>
</dbReference>
<dbReference type="RefSeq" id="WP_003016659.1">
    <property type="nucleotide sequence ID" value="NC_017463.1"/>
</dbReference>
<dbReference type="SMR" id="Q0BL47"/>
<dbReference type="KEGG" id="fth:FTH_1362"/>
<dbReference type="GO" id="GO:0005829">
    <property type="term" value="C:cytosol"/>
    <property type="evidence" value="ECO:0007669"/>
    <property type="project" value="TreeGrafter"/>
</dbReference>
<dbReference type="FunFam" id="2.20.25.10:FF:000002">
    <property type="entry name" value="UPF0434 protein YcaR"/>
    <property type="match status" value="1"/>
</dbReference>
<dbReference type="Gene3D" id="2.20.25.10">
    <property type="match status" value="1"/>
</dbReference>
<dbReference type="HAMAP" id="MF_01187">
    <property type="entry name" value="UPF0434"/>
    <property type="match status" value="1"/>
</dbReference>
<dbReference type="InterPro" id="IPR005651">
    <property type="entry name" value="Trm112-like"/>
</dbReference>
<dbReference type="PANTHER" id="PTHR33505:SF4">
    <property type="entry name" value="PROTEIN PREY, MITOCHONDRIAL"/>
    <property type="match status" value="1"/>
</dbReference>
<dbReference type="PANTHER" id="PTHR33505">
    <property type="entry name" value="ZGC:162634"/>
    <property type="match status" value="1"/>
</dbReference>
<dbReference type="Pfam" id="PF03966">
    <property type="entry name" value="Trm112p"/>
    <property type="match status" value="1"/>
</dbReference>
<dbReference type="SUPFAM" id="SSF158997">
    <property type="entry name" value="Trm112p-like"/>
    <property type="match status" value="1"/>
</dbReference>
<comment type="similarity">
    <text evidence="1">Belongs to the UPF0434 family.</text>
</comment>
<sequence length="62" mass="7142">MDHSVLNVLVCPICKANLYYDKENQVLVCKADKLAYPIRENIPVMLVEEAKKMTLEEVKKYG</sequence>
<gene>
    <name type="ordered locus">FTH_1362</name>
</gene>
<reference key="1">
    <citation type="journal article" date="2006" name="J. Bacteriol.">
        <title>Chromosome rearrangement and diversification of Francisella tularensis revealed by the type B (OSU18) genome sequence.</title>
        <authorList>
            <person name="Petrosino J.F."/>
            <person name="Xiang Q."/>
            <person name="Karpathy S.E."/>
            <person name="Jiang H."/>
            <person name="Yerrapragada S."/>
            <person name="Liu Y."/>
            <person name="Gioia J."/>
            <person name="Hemphill L."/>
            <person name="Gonzalez A."/>
            <person name="Raghavan T.M."/>
            <person name="Uzman A."/>
            <person name="Fox G.E."/>
            <person name="Highlander S."/>
            <person name="Reichard M."/>
            <person name="Morton R.J."/>
            <person name="Clinkenbeard K.D."/>
            <person name="Weinstock G.M."/>
        </authorList>
    </citation>
    <scope>NUCLEOTIDE SEQUENCE [LARGE SCALE GENOMIC DNA]</scope>
    <source>
        <strain>OSU18</strain>
    </source>
</reference>
<accession>Q0BL47</accession>
<organism>
    <name type="scientific">Francisella tularensis subsp. holarctica (strain OSU18)</name>
    <dbReference type="NCBI Taxonomy" id="393011"/>
    <lineage>
        <taxon>Bacteria</taxon>
        <taxon>Pseudomonadati</taxon>
        <taxon>Pseudomonadota</taxon>
        <taxon>Gammaproteobacteria</taxon>
        <taxon>Thiotrichales</taxon>
        <taxon>Francisellaceae</taxon>
        <taxon>Francisella</taxon>
    </lineage>
</organism>
<feature type="chain" id="PRO_0000291093" description="UPF0434 protein FTH_1362">
    <location>
        <begin position="1"/>
        <end position="62"/>
    </location>
</feature>
<proteinExistence type="inferred from homology"/>
<evidence type="ECO:0000255" key="1">
    <source>
        <dbReference type="HAMAP-Rule" id="MF_01187"/>
    </source>
</evidence>
<protein>
    <recommendedName>
        <fullName evidence="1">UPF0434 protein FTH_1362</fullName>
    </recommendedName>
</protein>